<accession>Q1BTH0</accession>
<reference key="1">
    <citation type="submission" date="2006-05" db="EMBL/GenBank/DDBJ databases">
        <title>Complete sequence of chromosome 1 of Burkholderia cenocepacia AU 1054.</title>
        <authorList>
            <consortium name="US DOE Joint Genome Institute"/>
            <person name="Copeland A."/>
            <person name="Lucas S."/>
            <person name="Lapidus A."/>
            <person name="Barry K."/>
            <person name="Detter J.C."/>
            <person name="Glavina del Rio T."/>
            <person name="Hammon N."/>
            <person name="Israni S."/>
            <person name="Dalin E."/>
            <person name="Tice H."/>
            <person name="Pitluck S."/>
            <person name="Chain P."/>
            <person name="Malfatti S."/>
            <person name="Shin M."/>
            <person name="Vergez L."/>
            <person name="Schmutz J."/>
            <person name="Larimer F."/>
            <person name="Land M."/>
            <person name="Hauser L."/>
            <person name="Kyrpides N."/>
            <person name="Lykidis A."/>
            <person name="LiPuma J.J."/>
            <person name="Konstantinidis K."/>
            <person name="Tiedje J.M."/>
            <person name="Richardson P."/>
        </authorList>
    </citation>
    <scope>NUCLEOTIDE SEQUENCE [LARGE SCALE GENOMIC DNA]</scope>
    <source>
        <strain>AU 1054</strain>
    </source>
</reference>
<feature type="initiator methionine" description="Removed" evidence="1">
    <location>
        <position position="1"/>
    </location>
</feature>
<feature type="chain" id="PRO_1000008681" description="Formamidopyrimidine-DNA glycosylase">
    <location>
        <begin position="2"/>
        <end position="275"/>
    </location>
</feature>
<feature type="zinc finger region" description="FPG-type" evidence="2">
    <location>
        <begin position="241"/>
        <end position="275"/>
    </location>
</feature>
<feature type="active site" description="Schiff-base intermediate with DNA" evidence="2">
    <location>
        <position position="2"/>
    </location>
</feature>
<feature type="active site" description="Proton donor" evidence="2">
    <location>
        <position position="3"/>
    </location>
</feature>
<feature type="active site" description="Proton donor; for beta-elimination activity" evidence="2">
    <location>
        <position position="58"/>
    </location>
</feature>
<feature type="active site" description="Proton donor; for delta-elimination activity" evidence="2">
    <location>
        <position position="265"/>
    </location>
</feature>
<feature type="binding site" evidence="2">
    <location>
        <position position="93"/>
    </location>
    <ligand>
        <name>DNA</name>
        <dbReference type="ChEBI" id="CHEBI:16991"/>
    </ligand>
</feature>
<feature type="binding site" evidence="2">
    <location>
        <position position="111"/>
    </location>
    <ligand>
        <name>DNA</name>
        <dbReference type="ChEBI" id="CHEBI:16991"/>
    </ligand>
</feature>
<feature type="binding site" evidence="2">
    <location>
        <position position="156"/>
    </location>
    <ligand>
        <name>DNA</name>
        <dbReference type="ChEBI" id="CHEBI:16991"/>
    </ligand>
</feature>
<sequence>MPELPEVEVTRRGIEPFVAGRRVERVDVRTAMLRWPVPAGLAEQLRAREVLAVERRGKYLLFEVDAGWFIVHLGMTGTLRVLPAAGVPVAAKHDHIDWIFDEFVLRFRDPRRFGAVLWHPREAGDVHAHPLLASLGVEPFSPAFTGALLHARTRGRTVSVKQALLAGDMVVGVGNIYASESLFRAGIRPTTAAGKVSLPRYERLADAVRATLADAIERGGSTLRDFVGSNGESGYFQLDCFVYDRAGQPCRVCGTPVRQIVQGQRSTYFCPTCQR</sequence>
<name>FPG_BURO1</name>
<organism>
    <name type="scientific">Burkholderia orbicola (strain AU 1054)</name>
    <dbReference type="NCBI Taxonomy" id="331271"/>
    <lineage>
        <taxon>Bacteria</taxon>
        <taxon>Pseudomonadati</taxon>
        <taxon>Pseudomonadota</taxon>
        <taxon>Betaproteobacteria</taxon>
        <taxon>Burkholderiales</taxon>
        <taxon>Burkholderiaceae</taxon>
        <taxon>Burkholderia</taxon>
        <taxon>Burkholderia cepacia complex</taxon>
        <taxon>Burkholderia orbicola</taxon>
    </lineage>
</organism>
<comment type="function">
    <text evidence="2">Involved in base excision repair of DNA damaged by oxidation or by mutagenic agents. Acts as a DNA glycosylase that recognizes and removes damaged bases. Has a preference for oxidized purines, such as 7,8-dihydro-8-oxoguanine (8-oxoG). Has AP (apurinic/apyrimidinic) lyase activity and introduces nicks in the DNA strand. Cleaves the DNA backbone by beta-delta elimination to generate a single-strand break at the site of the removed base with both 3'- and 5'-phosphates.</text>
</comment>
<comment type="catalytic activity">
    <reaction evidence="2">
        <text>Hydrolysis of DNA containing ring-opened 7-methylguanine residues, releasing 2,6-diamino-4-hydroxy-5-(N-methyl)formamidopyrimidine.</text>
        <dbReference type="EC" id="3.2.2.23"/>
    </reaction>
</comment>
<comment type="catalytic activity">
    <reaction evidence="2">
        <text>2'-deoxyribonucleotide-(2'-deoxyribose 5'-phosphate)-2'-deoxyribonucleotide-DNA = a 3'-end 2'-deoxyribonucleotide-(2,3-dehydro-2,3-deoxyribose 5'-phosphate)-DNA + a 5'-end 5'-phospho-2'-deoxyribonucleoside-DNA + H(+)</text>
        <dbReference type="Rhea" id="RHEA:66592"/>
        <dbReference type="Rhea" id="RHEA-COMP:13180"/>
        <dbReference type="Rhea" id="RHEA-COMP:16897"/>
        <dbReference type="Rhea" id="RHEA-COMP:17067"/>
        <dbReference type="ChEBI" id="CHEBI:15378"/>
        <dbReference type="ChEBI" id="CHEBI:136412"/>
        <dbReference type="ChEBI" id="CHEBI:157695"/>
        <dbReference type="ChEBI" id="CHEBI:167181"/>
        <dbReference type="EC" id="4.2.99.18"/>
    </reaction>
</comment>
<comment type="cofactor">
    <cofactor evidence="2">
        <name>Zn(2+)</name>
        <dbReference type="ChEBI" id="CHEBI:29105"/>
    </cofactor>
    <text evidence="2">Binds 1 zinc ion per subunit.</text>
</comment>
<comment type="subunit">
    <text evidence="2">Monomer.</text>
</comment>
<comment type="similarity">
    <text evidence="2">Belongs to the FPG family.</text>
</comment>
<keyword id="KW-0227">DNA damage</keyword>
<keyword id="KW-0234">DNA repair</keyword>
<keyword id="KW-0238">DNA-binding</keyword>
<keyword id="KW-0326">Glycosidase</keyword>
<keyword id="KW-0378">Hydrolase</keyword>
<keyword id="KW-0456">Lyase</keyword>
<keyword id="KW-0479">Metal-binding</keyword>
<keyword id="KW-0511">Multifunctional enzyme</keyword>
<keyword id="KW-0862">Zinc</keyword>
<keyword id="KW-0863">Zinc-finger</keyword>
<proteinExistence type="inferred from homology"/>
<dbReference type="EC" id="3.2.2.23" evidence="2"/>
<dbReference type="EC" id="4.2.99.18" evidence="2"/>
<dbReference type="EMBL" id="CP000378">
    <property type="protein sequence ID" value="ABF77085.1"/>
    <property type="molecule type" value="Genomic_DNA"/>
</dbReference>
<dbReference type="SMR" id="Q1BTH0"/>
<dbReference type="HOGENOM" id="CLU_038423_1_1_4"/>
<dbReference type="GO" id="GO:0034039">
    <property type="term" value="F:8-oxo-7,8-dihydroguanine DNA N-glycosylase activity"/>
    <property type="evidence" value="ECO:0007669"/>
    <property type="project" value="TreeGrafter"/>
</dbReference>
<dbReference type="GO" id="GO:0140078">
    <property type="term" value="F:class I DNA-(apurinic or apyrimidinic site) endonuclease activity"/>
    <property type="evidence" value="ECO:0007669"/>
    <property type="project" value="UniProtKB-EC"/>
</dbReference>
<dbReference type="GO" id="GO:0003684">
    <property type="term" value="F:damaged DNA binding"/>
    <property type="evidence" value="ECO:0007669"/>
    <property type="project" value="InterPro"/>
</dbReference>
<dbReference type="GO" id="GO:0008270">
    <property type="term" value="F:zinc ion binding"/>
    <property type="evidence" value="ECO:0007669"/>
    <property type="project" value="UniProtKB-UniRule"/>
</dbReference>
<dbReference type="GO" id="GO:0006284">
    <property type="term" value="P:base-excision repair"/>
    <property type="evidence" value="ECO:0007669"/>
    <property type="project" value="InterPro"/>
</dbReference>
<dbReference type="CDD" id="cd08966">
    <property type="entry name" value="EcFpg-like_N"/>
    <property type="match status" value="1"/>
</dbReference>
<dbReference type="FunFam" id="1.10.8.50:FF:000003">
    <property type="entry name" value="Formamidopyrimidine-DNA glycosylase"/>
    <property type="match status" value="1"/>
</dbReference>
<dbReference type="Gene3D" id="1.10.8.50">
    <property type="match status" value="1"/>
</dbReference>
<dbReference type="Gene3D" id="3.20.190.10">
    <property type="entry name" value="MutM-like, N-terminal"/>
    <property type="match status" value="1"/>
</dbReference>
<dbReference type="HAMAP" id="MF_00103">
    <property type="entry name" value="Fapy_DNA_glycosyl"/>
    <property type="match status" value="1"/>
</dbReference>
<dbReference type="InterPro" id="IPR015886">
    <property type="entry name" value="DNA_glyclase/AP_lyase_DNA-bd"/>
</dbReference>
<dbReference type="InterPro" id="IPR015887">
    <property type="entry name" value="DNA_glyclase_Znf_dom_DNA_BS"/>
</dbReference>
<dbReference type="InterPro" id="IPR020629">
    <property type="entry name" value="Formamido-pyr_DNA_Glyclase"/>
</dbReference>
<dbReference type="InterPro" id="IPR012319">
    <property type="entry name" value="FPG_cat"/>
</dbReference>
<dbReference type="InterPro" id="IPR035937">
    <property type="entry name" value="MutM-like_N-ter"/>
</dbReference>
<dbReference type="InterPro" id="IPR010979">
    <property type="entry name" value="Ribosomal_uS13-like_H2TH"/>
</dbReference>
<dbReference type="InterPro" id="IPR000214">
    <property type="entry name" value="Znf_DNA_glyclase/AP_lyase"/>
</dbReference>
<dbReference type="InterPro" id="IPR010663">
    <property type="entry name" value="Znf_FPG/IleRS"/>
</dbReference>
<dbReference type="NCBIfam" id="TIGR00577">
    <property type="entry name" value="fpg"/>
    <property type="match status" value="1"/>
</dbReference>
<dbReference type="NCBIfam" id="NF002211">
    <property type="entry name" value="PRK01103.1"/>
    <property type="match status" value="1"/>
</dbReference>
<dbReference type="PANTHER" id="PTHR22993">
    <property type="entry name" value="FORMAMIDOPYRIMIDINE-DNA GLYCOSYLASE"/>
    <property type="match status" value="1"/>
</dbReference>
<dbReference type="PANTHER" id="PTHR22993:SF9">
    <property type="entry name" value="FORMAMIDOPYRIMIDINE-DNA GLYCOSYLASE"/>
    <property type="match status" value="1"/>
</dbReference>
<dbReference type="Pfam" id="PF01149">
    <property type="entry name" value="Fapy_DNA_glyco"/>
    <property type="match status" value="1"/>
</dbReference>
<dbReference type="Pfam" id="PF06831">
    <property type="entry name" value="H2TH"/>
    <property type="match status" value="1"/>
</dbReference>
<dbReference type="Pfam" id="PF06827">
    <property type="entry name" value="zf-FPG_IleRS"/>
    <property type="match status" value="1"/>
</dbReference>
<dbReference type="SMART" id="SM00898">
    <property type="entry name" value="Fapy_DNA_glyco"/>
    <property type="match status" value="1"/>
</dbReference>
<dbReference type="SMART" id="SM01232">
    <property type="entry name" value="H2TH"/>
    <property type="match status" value="1"/>
</dbReference>
<dbReference type="SUPFAM" id="SSF57716">
    <property type="entry name" value="Glucocorticoid receptor-like (DNA-binding domain)"/>
    <property type="match status" value="1"/>
</dbReference>
<dbReference type="SUPFAM" id="SSF81624">
    <property type="entry name" value="N-terminal domain of MutM-like DNA repair proteins"/>
    <property type="match status" value="1"/>
</dbReference>
<dbReference type="SUPFAM" id="SSF46946">
    <property type="entry name" value="S13-like H2TH domain"/>
    <property type="match status" value="1"/>
</dbReference>
<dbReference type="PROSITE" id="PS51068">
    <property type="entry name" value="FPG_CAT"/>
    <property type="match status" value="1"/>
</dbReference>
<dbReference type="PROSITE" id="PS01242">
    <property type="entry name" value="ZF_FPG_1"/>
    <property type="match status" value="1"/>
</dbReference>
<dbReference type="PROSITE" id="PS51066">
    <property type="entry name" value="ZF_FPG_2"/>
    <property type="match status" value="1"/>
</dbReference>
<evidence type="ECO:0000250" key="1"/>
<evidence type="ECO:0000255" key="2">
    <source>
        <dbReference type="HAMAP-Rule" id="MF_00103"/>
    </source>
</evidence>
<gene>
    <name evidence="2" type="primary">mutM</name>
    <name evidence="2" type="synonym">fpg</name>
    <name type="ordered locus">Bcen_2184</name>
</gene>
<protein>
    <recommendedName>
        <fullName evidence="2">Formamidopyrimidine-DNA glycosylase</fullName>
        <shortName evidence="2">Fapy-DNA glycosylase</shortName>
        <ecNumber evidence="2">3.2.2.23</ecNumber>
    </recommendedName>
    <alternativeName>
        <fullName evidence="2">DNA-(apurinic or apyrimidinic site) lyase MutM</fullName>
        <shortName evidence="2">AP lyase MutM</shortName>
        <ecNumber evidence="2">4.2.99.18</ecNumber>
    </alternativeName>
</protein>